<name>RL7_XYLF2</name>
<evidence type="ECO:0000255" key="1">
    <source>
        <dbReference type="HAMAP-Rule" id="MF_00368"/>
    </source>
</evidence>
<evidence type="ECO:0000305" key="2"/>
<accession>B2IA69</accession>
<sequence>MSLTNEKIVEAIAEKSIMEVMELVKAIEDRFGVSAAAPVMVSGSAAAAAPVEEQTEFTVTLKEAGAKKVEVIKAVRAVTGLGLKEAKDLTEAGGILKEAVSKEEAEKVKKELEAAGATVEVK</sequence>
<proteinExistence type="inferred from homology"/>
<organism>
    <name type="scientific">Xylella fastidiosa (strain M23)</name>
    <dbReference type="NCBI Taxonomy" id="405441"/>
    <lineage>
        <taxon>Bacteria</taxon>
        <taxon>Pseudomonadati</taxon>
        <taxon>Pseudomonadota</taxon>
        <taxon>Gammaproteobacteria</taxon>
        <taxon>Lysobacterales</taxon>
        <taxon>Lysobacteraceae</taxon>
        <taxon>Xylella</taxon>
    </lineage>
</organism>
<reference key="1">
    <citation type="journal article" date="2010" name="J. Bacteriol.">
        <title>Whole genome sequences of two Xylella fastidiosa strains (M12 and M23) causing almond leaf scorch disease in California.</title>
        <authorList>
            <person name="Chen J."/>
            <person name="Xie G."/>
            <person name="Han S."/>
            <person name="Chertkov O."/>
            <person name="Sims D."/>
            <person name="Civerolo E.L."/>
        </authorList>
    </citation>
    <scope>NUCLEOTIDE SEQUENCE [LARGE SCALE GENOMIC DNA]</scope>
    <source>
        <strain>M23</strain>
    </source>
</reference>
<comment type="function">
    <text evidence="1">Forms part of the ribosomal stalk which helps the ribosome interact with GTP-bound translation factors. Is thus essential for accurate translation.</text>
</comment>
<comment type="subunit">
    <text evidence="1">Homodimer. Part of the ribosomal stalk of the 50S ribosomal subunit. Forms a multimeric L10(L12)X complex, where L10 forms an elongated spine to which 2 to 4 L12 dimers bind in a sequential fashion. Binds GTP-bound translation factors.</text>
</comment>
<comment type="similarity">
    <text evidence="1">Belongs to the bacterial ribosomal protein bL12 family.</text>
</comment>
<dbReference type="EMBL" id="CP001011">
    <property type="protein sequence ID" value="ACB93505.1"/>
    <property type="molecule type" value="Genomic_DNA"/>
</dbReference>
<dbReference type="RefSeq" id="WP_004090727.1">
    <property type="nucleotide sequence ID" value="NC_010577.1"/>
</dbReference>
<dbReference type="SMR" id="B2IA69"/>
<dbReference type="GeneID" id="93905863"/>
<dbReference type="KEGG" id="xfn:XfasM23_2107"/>
<dbReference type="HOGENOM" id="CLU_086499_3_2_6"/>
<dbReference type="Proteomes" id="UP000001698">
    <property type="component" value="Chromosome"/>
</dbReference>
<dbReference type="GO" id="GO:0022625">
    <property type="term" value="C:cytosolic large ribosomal subunit"/>
    <property type="evidence" value="ECO:0007669"/>
    <property type="project" value="TreeGrafter"/>
</dbReference>
<dbReference type="GO" id="GO:0003729">
    <property type="term" value="F:mRNA binding"/>
    <property type="evidence" value="ECO:0007669"/>
    <property type="project" value="TreeGrafter"/>
</dbReference>
<dbReference type="GO" id="GO:0003735">
    <property type="term" value="F:structural constituent of ribosome"/>
    <property type="evidence" value="ECO:0007669"/>
    <property type="project" value="InterPro"/>
</dbReference>
<dbReference type="GO" id="GO:0006412">
    <property type="term" value="P:translation"/>
    <property type="evidence" value="ECO:0007669"/>
    <property type="project" value="UniProtKB-UniRule"/>
</dbReference>
<dbReference type="CDD" id="cd00387">
    <property type="entry name" value="Ribosomal_L7_L12"/>
    <property type="match status" value="1"/>
</dbReference>
<dbReference type="FunFam" id="3.30.1390.10:FF:000001">
    <property type="entry name" value="50S ribosomal protein L7/L12"/>
    <property type="match status" value="1"/>
</dbReference>
<dbReference type="Gene3D" id="3.30.1390.10">
    <property type="match status" value="1"/>
</dbReference>
<dbReference type="Gene3D" id="1.20.5.710">
    <property type="entry name" value="Single helix bin"/>
    <property type="match status" value="1"/>
</dbReference>
<dbReference type="HAMAP" id="MF_00368">
    <property type="entry name" value="Ribosomal_bL12"/>
    <property type="match status" value="1"/>
</dbReference>
<dbReference type="InterPro" id="IPR000206">
    <property type="entry name" value="Ribosomal_bL12"/>
</dbReference>
<dbReference type="InterPro" id="IPR013823">
    <property type="entry name" value="Ribosomal_bL12_C"/>
</dbReference>
<dbReference type="InterPro" id="IPR014719">
    <property type="entry name" value="Ribosomal_bL12_C/ClpS-like"/>
</dbReference>
<dbReference type="InterPro" id="IPR008932">
    <property type="entry name" value="Ribosomal_bL12_oligo"/>
</dbReference>
<dbReference type="InterPro" id="IPR036235">
    <property type="entry name" value="Ribosomal_bL12_oligo_N_sf"/>
</dbReference>
<dbReference type="NCBIfam" id="TIGR00855">
    <property type="entry name" value="L12"/>
    <property type="match status" value="1"/>
</dbReference>
<dbReference type="PANTHER" id="PTHR45987">
    <property type="entry name" value="39S RIBOSOMAL PROTEIN L12"/>
    <property type="match status" value="1"/>
</dbReference>
<dbReference type="PANTHER" id="PTHR45987:SF4">
    <property type="entry name" value="LARGE RIBOSOMAL SUBUNIT PROTEIN BL12M"/>
    <property type="match status" value="1"/>
</dbReference>
<dbReference type="Pfam" id="PF00542">
    <property type="entry name" value="Ribosomal_L12"/>
    <property type="match status" value="1"/>
</dbReference>
<dbReference type="Pfam" id="PF16320">
    <property type="entry name" value="Ribosomal_L12_N"/>
    <property type="match status" value="1"/>
</dbReference>
<dbReference type="SUPFAM" id="SSF54736">
    <property type="entry name" value="ClpS-like"/>
    <property type="match status" value="1"/>
</dbReference>
<dbReference type="SUPFAM" id="SSF48300">
    <property type="entry name" value="Ribosomal protein L7/12, oligomerisation (N-terminal) domain"/>
    <property type="match status" value="1"/>
</dbReference>
<gene>
    <name evidence="1" type="primary">rplL</name>
    <name type="ordered locus">XfasM23_2107</name>
</gene>
<protein>
    <recommendedName>
        <fullName evidence="1">Large ribosomal subunit protein bL12</fullName>
    </recommendedName>
    <alternativeName>
        <fullName evidence="2">50S ribosomal protein L7/L12</fullName>
    </alternativeName>
</protein>
<keyword id="KW-0687">Ribonucleoprotein</keyword>
<keyword id="KW-0689">Ribosomal protein</keyword>
<feature type="chain" id="PRO_1000121509" description="Large ribosomal subunit protein bL12">
    <location>
        <begin position="1"/>
        <end position="122"/>
    </location>
</feature>